<dbReference type="EC" id="2.1.1.-" evidence="4"/>
<dbReference type="EC" id="2.7.7.-" evidence="4"/>
<dbReference type="EC" id="3.4.22.-" evidence="6"/>
<dbReference type="EC" id="3.6.1.15" evidence="6"/>
<dbReference type="EC" id="3.6.1.74" evidence="3"/>
<dbReference type="EC" id="3.6.4.13" evidence="6"/>
<dbReference type="EC" id="3.1.3.84" evidence="13 6"/>
<dbReference type="EC" id="2.7.7.19" evidence="2"/>
<dbReference type="EC" id="2.7.7.48" evidence="8"/>
<dbReference type="EMBL" id="AY726732">
    <property type="protein sequence ID" value="AAU43880.1"/>
    <property type="molecule type" value="Genomic_RNA"/>
</dbReference>
<dbReference type="PDB" id="6W0T">
    <property type="method" value="X-ray"/>
    <property type="resolution" value="1.95 A"/>
    <property type="chains" value="A/B/C/D=1334-1493"/>
</dbReference>
<dbReference type="PDBsum" id="6W0T"/>
<dbReference type="IntAct" id="Q5XXP4">
    <property type="interactions" value="1"/>
</dbReference>
<dbReference type="MEROPS" id="C09.001"/>
<dbReference type="Proteomes" id="UP000008450">
    <property type="component" value="Genome"/>
</dbReference>
<dbReference type="GO" id="GO:0044162">
    <property type="term" value="C:host cell cytoplasmic vesicle membrane"/>
    <property type="evidence" value="ECO:0007669"/>
    <property type="project" value="UniProtKB-SubCell"/>
</dbReference>
<dbReference type="GO" id="GO:0044176">
    <property type="term" value="C:host cell filopodium"/>
    <property type="evidence" value="ECO:0007669"/>
    <property type="project" value="UniProtKB-SubCell"/>
</dbReference>
<dbReference type="GO" id="GO:0042025">
    <property type="term" value="C:host cell nucleus"/>
    <property type="evidence" value="ECO:0007669"/>
    <property type="project" value="UniProtKB-SubCell"/>
</dbReference>
<dbReference type="GO" id="GO:0020002">
    <property type="term" value="C:host cell plasma membrane"/>
    <property type="evidence" value="ECO:0007669"/>
    <property type="project" value="UniProtKB-SubCell"/>
</dbReference>
<dbReference type="GO" id="GO:0016020">
    <property type="term" value="C:membrane"/>
    <property type="evidence" value="ECO:0007669"/>
    <property type="project" value="UniProtKB-KW"/>
</dbReference>
<dbReference type="GO" id="GO:0005524">
    <property type="term" value="F:ATP binding"/>
    <property type="evidence" value="ECO:0007669"/>
    <property type="project" value="UniProtKB-KW"/>
</dbReference>
<dbReference type="GO" id="GO:0016887">
    <property type="term" value="F:ATP hydrolysis activity"/>
    <property type="evidence" value="ECO:0007669"/>
    <property type="project" value="RHEA"/>
</dbReference>
<dbReference type="GO" id="GO:0008234">
    <property type="term" value="F:cysteine-type peptidase activity"/>
    <property type="evidence" value="ECO:0007669"/>
    <property type="project" value="UniProtKB-KW"/>
</dbReference>
<dbReference type="GO" id="GO:0005525">
    <property type="term" value="F:GTP binding"/>
    <property type="evidence" value="ECO:0007669"/>
    <property type="project" value="UniProtKB-KW"/>
</dbReference>
<dbReference type="GO" id="GO:0046872">
    <property type="term" value="F:metal ion binding"/>
    <property type="evidence" value="ECO:0007669"/>
    <property type="project" value="UniProtKB-KW"/>
</dbReference>
<dbReference type="GO" id="GO:0140818">
    <property type="term" value="F:mRNA 5'-triphosphate monophosphatase activity"/>
    <property type="evidence" value="ECO:0007669"/>
    <property type="project" value="RHEA"/>
</dbReference>
<dbReference type="GO" id="GO:0008174">
    <property type="term" value="F:mRNA methyltransferase activity"/>
    <property type="evidence" value="ECO:0007669"/>
    <property type="project" value="InterPro"/>
</dbReference>
<dbReference type="GO" id="GO:1990817">
    <property type="term" value="F:poly(A) RNA polymerase activity"/>
    <property type="evidence" value="ECO:0007669"/>
    <property type="project" value="UniProtKB-EC"/>
</dbReference>
<dbReference type="GO" id="GO:0004651">
    <property type="term" value="F:polynucleotide 5'-phosphatase activity"/>
    <property type="evidence" value="ECO:0007669"/>
    <property type="project" value="UniProtKB-EC"/>
</dbReference>
<dbReference type="GO" id="GO:0003723">
    <property type="term" value="F:RNA binding"/>
    <property type="evidence" value="ECO:0007669"/>
    <property type="project" value="UniProtKB-KW"/>
</dbReference>
<dbReference type="GO" id="GO:0003724">
    <property type="term" value="F:RNA helicase activity"/>
    <property type="evidence" value="ECO:0007669"/>
    <property type="project" value="UniProtKB-EC"/>
</dbReference>
<dbReference type="GO" id="GO:0003968">
    <property type="term" value="F:RNA-directed RNA polymerase activity"/>
    <property type="evidence" value="ECO:0007669"/>
    <property type="project" value="UniProtKB-KW"/>
</dbReference>
<dbReference type="GO" id="GO:0006370">
    <property type="term" value="P:7-methylguanosine mRNA capping"/>
    <property type="evidence" value="ECO:0007669"/>
    <property type="project" value="UniProtKB-KW"/>
</dbReference>
<dbReference type="GO" id="GO:0006351">
    <property type="term" value="P:DNA-templated transcription"/>
    <property type="evidence" value="ECO:0007669"/>
    <property type="project" value="InterPro"/>
</dbReference>
<dbReference type="GO" id="GO:0032259">
    <property type="term" value="P:methylation"/>
    <property type="evidence" value="ECO:0007669"/>
    <property type="project" value="UniProtKB-KW"/>
</dbReference>
<dbReference type="GO" id="GO:0016556">
    <property type="term" value="P:mRNA modification"/>
    <property type="evidence" value="ECO:0007669"/>
    <property type="project" value="InterPro"/>
</dbReference>
<dbReference type="GO" id="GO:0006508">
    <property type="term" value="P:proteolysis"/>
    <property type="evidence" value="ECO:0007669"/>
    <property type="project" value="UniProtKB-KW"/>
</dbReference>
<dbReference type="GO" id="GO:0039657">
    <property type="term" value="P:symbiont-mediated suppression of host gene expression"/>
    <property type="evidence" value="ECO:0007669"/>
    <property type="project" value="UniProtKB-KW"/>
</dbReference>
<dbReference type="GO" id="GO:0039523">
    <property type="term" value="P:symbiont-mediated suppression of host mRNA transcription via inhibition of RNA polymerase II activity"/>
    <property type="evidence" value="ECO:0007669"/>
    <property type="project" value="UniProtKB-KW"/>
</dbReference>
<dbReference type="GO" id="GO:0039694">
    <property type="term" value="P:viral RNA genome replication"/>
    <property type="evidence" value="ECO:0007669"/>
    <property type="project" value="InterPro"/>
</dbReference>
<dbReference type="CDD" id="cd21557">
    <property type="entry name" value="Macro_X_Nsp3-like"/>
    <property type="match status" value="1"/>
</dbReference>
<dbReference type="CDD" id="cd23250">
    <property type="entry name" value="Togaviridae_RdRp"/>
    <property type="match status" value="1"/>
</dbReference>
<dbReference type="FunFam" id="3.90.70.110:FF:000001">
    <property type="entry name" value="Non-structural polyprotein P1234"/>
    <property type="match status" value="1"/>
</dbReference>
<dbReference type="FunFam" id="3.40.220.10:FF:000015">
    <property type="entry name" value="Polyprotein P1234"/>
    <property type="match status" value="1"/>
</dbReference>
<dbReference type="FunFam" id="3.40.50.150:FF:000323">
    <property type="entry name" value="Polyprotein P1234"/>
    <property type="match status" value="1"/>
</dbReference>
<dbReference type="FunFam" id="3.40.50.300:FF:001403">
    <property type="entry name" value="Polyprotein P1234"/>
    <property type="match status" value="1"/>
</dbReference>
<dbReference type="FunFam" id="3.40.50.300:FF:001415">
    <property type="entry name" value="Polyprotein P1234"/>
    <property type="match status" value="1"/>
</dbReference>
<dbReference type="Gene3D" id="3.90.70.110">
    <property type="entry name" value="Alphavirus nsP2 protease domain"/>
    <property type="match status" value="1"/>
</dbReference>
<dbReference type="Gene3D" id="3.40.220.10">
    <property type="entry name" value="Leucine Aminopeptidase, subunit E, domain 1"/>
    <property type="match status" value="1"/>
</dbReference>
<dbReference type="Gene3D" id="3.40.50.300">
    <property type="entry name" value="P-loop containing nucleotide triphosphate hydrolases"/>
    <property type="match status" value="2"/>
</dbReference>
<dbReference type="Gene3D" id="3.40.50.150">
    <property type="entry name" value="Vaccinia Virus protein VP39"/>
    <property type="match status" value="1"/>
</dbReference>
<dbReference type="InterPro" id="IPR027351">
    <property type="entry name" value="(+)RNA_virus_helicase_core_dom"/>
</dbReference>
<dbReference type="InterPro" id="IPR002588">
    <property type="entry name" value="Alphavirus-like_MT_dom"/>
</dbReference>
<dbReference type="InterPro" id="IPR002620">
    <property type="entry name" value="Alphavirus_nsp2pro"/>
</dbReference>
<dbReference type="InterPro" id="IPR044936">
    <property type="entry name" value="Alphavirus_nsp2pro_sf"/>
</dbReference>
<dbReference type="InterPro" id="IPR043502">
    <property type="entry name" value="DNA/RNA_pol_sf"/>
</dbReference>
<dbReference type="InterPro" id="IPR002589">
    <property type="entry name" value="Macro_dom"/>
</dbReference>
<dbReference type="InterPro" id="IPR043472">
    <property type="entry name" value="Macro_dom-like"/>
</dbReference>
<dbReference type="InterPro" id="IPR044371">
    <property type="entry name" value="Macro_X_NSP3-like"/>
</dbReference>
<dbReference type="InterPro" id="IPR048891">
    <property type="entry name" value="nsP3_ZBD"/>
</dbReference>
<dbReference type="InterPro" id="IPR027417">
    <property type="entry name" value="P-loop_NTPase"/>
</dbReference>
<dbReference type="InterPro" id="IPR001788">
    <property type="entry name" value="RNA-dep_RNA_pol_alsuvir"/>
</dbReference>
<dbReference type="InterPro" id="IPR007094">
    <property type="entry name" value="RNA-dir_pol_PSvirus"/>
</dbReference>
<dbReference type="InterPro" id="IPR029063">
    <property type="entry name" value="SAM-dependent_MTases_sf"/>
</dbReference>
<dbReference type="InterPro" id="IPR047311">
    <property type="entry name" value="Togaviridae_RdRp"/>
</dbReference>
<dbReference type="InterPro" id="IPR049329">
    <property type="entry name" value="ToMV_Hel_N"/>
</dbReference>
<dbReference type="Pfam" id="PF01661">
    <property type="entry name" value="Macro"/>
    <property type="match status" value="1"/>
</dbReference>
<dbReference type="Pfam" id="PF20852">
    <property type="entry name" value="nsP3_ZBD"/>
    <property type="match status" value="1"/>
</dbReference>
<dbReference type="Pfam" id="PF01707">
    <property type="entry name" value="Peptidase_C9"/>
    <property type="match status" value="1"/>
</dbReference>
<dbReference type="Pfam" id="PF00978">
    <property type="entry name" value="RdRP_2"/>
    <property type="match status" value="1"/>
</dbReference>
<dbReference type="Pfam" id="PF20896">
    <property type="entry name" value="ToMV_Hel_N"/>
    <property type="match status" value="1"/>
</dbReference>
<dbReference type="Pfam" id="PF01443">
    <property type="entry name" value="Viral_helicase1"/>
    <property type="match status" value="1"/>
</dbReference>
<dbReference type="Pfam" id="PF01660">
    <property type="entry name" value="Vmethyltransf"/>
    <property type="match status" value="1"/>
</dbReference>
<dbReference type="SMART" id="SM00506">
    <property type="entry name" value="A1pp"/>
    <property type="match status" value="1"/>
</dbReference>
<dbReference type="SUPFAM" id="SSF56672">
    <property type="entry name" value="DNA/RNA polymerases"/>
    <property type="match status" value="1"/>
</dbReference>
<dbReference type="SUPFAM" id="SSF52949">
    <property type="entry name" value="Macro domain-like"/>
    <property type="match status" value="1"/>
</dbReference>
<dbReference type="SUPFAM" id="SSF52540">
    <property type="entry name" value="P-loop containing nucleoside triphosphate hydrolases"/>
    <property type="match status" value="1"/>
</dbReference>
<dbReference type="PROSITE" id="PS51743">
    <property type="entry name" value="ALPHAVIRUS_MT"/>
    <property type="match status" value="1"/>
</dbReference>
<dbReference type="PROSITE" id="PS51154">
    <property type="entry name" value="MACRO"/>
    <property type="match status" value="1"/>
</dbReference>
<dbReference type="PROSITE" id="PS51520">
    <property type="entry name" value="NSP2PRO"/>
    <property type="match status" value="1"/>
</dbReference>
<dbReference type="PROSITE" id="PS51657">
    <property type="entry name" value="PSRV_HELICASE"/>
    <property type="match status" value="1"/>
</dbReference>
<dbReference type="PROSITE" id="PS50507">
    <property type="entry name" value="RDRP_SSRNA_POS"/>
    <property type="match status" value="1"/>
</dbReference>
<name>POLN_CHIK3</name>
<sequence length="2474" mass="275933">MDPVYVDIDADSAFLKALQRAYPMFEVEPRQVTPNDHANARAFSHLAIKLIEQEIDPDSTILDIGSAPARRMMSDRKYHCVCPMRSAEDPERLANYARKLASAAGKVLDRNISEKIGDLQAVMAVPDAETPTFCLHTDVSCRQRADVAIYQDVYAVHAPTSLYHQAIKGVRVAYWIGFDTTPFMYNAMAGAYPSYSTNWADEQVLKAKNIGLCSTDLTEGRRGKLSIMRGKKMKPCDRVLFSVGSTLYPESRKLLKSWHLPSVFHLKGKLSFTCRCDTVVSCEGYVVKRITISPGLYGKTTGYAVTHHADGFLMCKTTDTVDGERVSFSVCTYVPATICDQMTGILATEVTPEDAQKLLVGLNQRIVVNGRTQRNTNTMKNYLLPVVAQAFSKWAKECRKDMEDEKLLGIRERTLTCCCLWAFKKQKTHTVYKRPDTQSIQKVPAEFDSFVVPSLWSSGLSIPLRTRIKWLLSKVPKTDLIPYSGDAKEARDAEKEAEEEREAELTREALPPLQAAQDDVQVEIDVEQLEDRAGAGIIETPRGAIKVTAQPTDHVVGEYLVLSPQTVLRSQKLSLIHALAEQVKTCTHSGRAGRYAVEAYDGRILVPSGYAISPEDFQSLSESATMVYNEREFVNRKLHHIALHGPALNTDEESYELVRAERTEHEYVYDVDQRRCCKKEEAAGLVLVGDLTNPPYHEFAYEGLRIRPACPYKTAVIGVFGVPGSGKSAIIKNLVTRQDLVTSGKKENCQEISTDVMRQRNLEISARTVDSLLLNGCNRPVDVLYVDEAFACHSGTLLALIALVRPRQKVVLCGDPKQCGFFNMMQMKVNYNHNICTQVYHKSISRRCTLPVTAIVSSLHYEGKMRTTNEYNKPIVVDTTGSTKPDPGDLVLTCFRGWVKQLQIDYRGHEVMTAAASQGLTRKGVYAVRQKVNENPLYASTSEHVNVLLTRTEGKLVWKTLSGDPWIKTLQNPPKGNFKATIKEWEVEHASIMAGICNHQVTFDTFQNKANVCWAKSLVPILETAGIKLNDRQWSQIIQAFKEDRAYSPEVALNEICTRMYGVDLDSGLFSKPLVSVHYADNHWDNRPGGKMFGFNPEAASILERKYPFTKGKWNTNKQICVTTRRIEDFNPNTNIIPANRRLPHSLVAEHRPVKGERMEWLVNKINGHHVLLVSGYNLVLPTKRVTWVAPLGIRGADYTYNLELGLPATLGRYDLVIINIHTPFRIHHYQQCVDHAMKLQMLGGDSLRLLKPGGSLLIRAYGYADRTSERVVCVLGRKFRSSRALKPPCVTSNTEMFFLFSNFDNGRRNFTTHVMNNQLNAAFVGQATRAGCAPSYRVKRMDIAKNDEECVVNAANPRGLPGDGVCKAVYKKWPESFKNSATPVGTAKTVMCGTYPVIHAVGPNFSNYSESEGDRELAAAYREVAKEVTRLGVNSVAIPLLSTGVYSGGKDRLTQSLNHLFTALDSTDADVVIYCRDKEWEKKIAEAIQMRTQVELLDEHISVDCDIIRVHPDSSLAGRKGYSTTEGSLYSYLEGTRFHQTAVDMAEVYTMWPKQTEANEQVCLYALGESIESIRQKCPVDDADASSPPKTVPCLCRYAMTPERVTRLRMNHVTSIIVCSSFPLPKYKIEGVQKVKCSKVMLFDHNVPSRVSPREYKSPQETAQEVSSTTSLTHSQFDLSVDGEELPAPSDLEADAPIPEPTPDDRAVLTLPPTIDNFSAVSDWVMNTAPVAPPRRRRGKNLNVTCDEREGNVLPMASVRFFRADLHSIVQETAEIRDTAASLQAPLSVATEPNQLPISFGAPNETFPITFGDFDEGEIESLSSELLTFGDFSPGEVDDLTDSDWSTCSDTDDELXLDRAGGYIFSSDTGPGHLQQRSVRQTVLPVNTLEEVQEEKCYPPKLDEVKEQLLLKKLQESASMANRSRYQSRKVENMKATIVQRLKGGCKLYLMSETPKVPTYRTTYPAPVYSPPINIRLSNPESAVAACNEFLARNYPTVASYQITDEYDAYLDMVDGSESCLDRATFNPSKLRSYPKQHSYHAPTIRSAVPSPFQNTLQNVLAAATKRNCNVTQMRELPTLDSAVFNVECFKKFACNQEYWKEFAASPIRITTENLTTYVTKLKGPKAAALFAKTHNLLPLQEVPMDRFTVDMKRDVKVTPGTKHTEERPKVQVIQAAEPLATAYLCGIHRELVRRLNAVLLPNVHTLFDMSAEDFDAIIAAHFKPGDAVLETDIASFDKSQDDSLALTALMLLEDLGVDHPLLDLIEAAFGEISSCHLPTGTRFKFGAMMKSGMFLTLFVNTLLNITIASRVLEDRLTRSACAAFIGDDNIIHGVVSDELMAARCATWMNMEVKIIDAVVSQKAPYFCGGFILYDTVAGTACRVADPLKRLFKLGKPLAAGDEQDDDRRRALADEVVRWQRTGLTDELEKAVHSRYEVQGISVVVMSMATFASSRSNFEKLRGPVVTLYGGPK</sequence>
<reference key="1">
    <citation type="journal article" date="2005" name="Am. J. Trop. Med. Hyg.">
        <title>Differential infectivities of O'Nyong-Nyong and Chikungunya virus isolates in Anopheles gambiae and Aedes aegypti mosquitoes.</title>
        <authorList>
            <person name="Vanlandingham D.L."/>
            <person name="Hong C."/>
            <person name="Klingler K."/>
            <person name="Tsetsarkin K."/>
            <person name="McElroy K.L."/>
            <person name="Powers A.M."/>
            <person name="Lehane M.J."/>
            <person name="Higgs S."/>
        </authorList>
    </citation>
    <scope>NUCLEOTIDE SEQUENCE [GENOMIC RNA]</scope>
</reference>
<protein>
    <recommendedName>
        <fullName>Polyprotein P1234</fullName>
        <shortName>P1234</shortName>
    </recommendedName>
    <alternativeName>
        <fullName>Non-structural polyprotein</fullName>
    </alternativeName>
    <component>
        <recommendedName>
            <fullName>Polyprotein P123'</fullName>
            <shortName>P123'</shortName>
        </recommendedName>
    </component>
    <component>
        <recommendedName>
            <fullName>Polyprotein P123</fullName>
            <shortName>P123</shortName>
        </recommendedName>
    </component>
    <component>
        <recommendedName>
            <fullName>mRNA-capping enzyme nsP1</fullName>
            <ecNumber evidence="4">2.1.1.-</ecNumber>
            <ecNumber evidence="4">2.7.7.-</ecNumber>
        </recommendedName>
        <alternativeName>
            <fullName>Non-structural protein 1</fullName>
        </alternativeName>
    </component>
    <component>
        <recommendedName>
            <fullName>Protease nsP2</fullName>
            <ecNumber evidence="6">3.4.22.-</ecNumber>
            <ecNumber evidence="6">3.6.1.15</ecNumber>
            <ecNumber evidence="3">3.6.1.74</ecNumber>
            <ecNumber evidence="6">3.6.4.13</ecNumber>
        </recommendedName>
        <alternativeName>
            <fullName>Non-structural protein 2</fullName>
            <shortName>nsP2</shortName>
        </alternativeName>
    </component>
    <component>
        <recommendedName>
            <fullName>Non-structural protein 3'</fullName>
            <shortName>nsP3'</shortName>
            <ecNumber evidence="13">3.1.3.84</ecNumber>
        </recommendedName>
    </component>
    <component>
        <recommendedName>
            <fullName>Non-structural protein 3</fullName>
            <shortName>nsP3</shortName>
            <ecNumber evidence="6">3.1.3.84</ecNumber>
        </recommendedName>
    </component>
    <component>
        <recommendedName>
            <fullName>RNA-directed RNA polymerase nsP4</fullName>
            <ecNumber evidence="2">2.7.7.19</ecNumber>
            <ecNumber evidence="8">2.7.7.48</ecNumber>
        </recommendedName>
        <alternativeName>
            <fullName>Non-structural protein 4</fullName>
            <shortName>nsP4</shortName>
        </alternativeName>
    </component>
</protein>
<organismHost>
    <name type="scientific">Aedes aegypti</name>
    <name type="common">Yellowfever mosquito</name>
    <name type="synonym">Culex aegypti</name>
    <dbReference type="NCBI Taxonomy" id="7159"/>
</organismHost>
<organismHost>
    <name type="scientific">Aedes albopictus</name>
    <name type="common">Asian tiger mosquito</name>
    <name type="synonym">Stegomyia albopicta</name>
    <dbReference type="NCBI Taxonomy" id="7160"/>
</organismHost>
<organismHost>
    <name type="scientific">Aedes furcifer</name>
    <name type="common">Mosquito</name>
    <dbReference type="NCBI Taxonomy" id="299627"/>
</organismHost>
<organismHost>
    <name type="scientific">Aedes polynesiensis</name>
    <name type="common">Polynesian tiger mosquito</name>
    <dbReference type="NCBI Taxonomy" id="188700"/>
</organismHost>
<organismHost>
    <name type="scientific">Cercopithecus</name>
    <dbReference type="NCBI Taxonomy" id="9533"/>
</organismHost>
<organismHost>
    <name type="scientific">Homo sapiens</name>
    <name type="common">Human</name>
    <dbReference type="NCBI Taxonomy" id="9606"/>
</organismHost>
<organismHost>
    <name type="scientific">Macaca</name>
    <name type="common">macaques</name>
    <dbReference type="NCBI Taxonomy" id="9539"/>
</organismHost>
<organismHost>
    <name type="scientific">Pan troglodytes</name>
    <name type="common">Chimpanzee</name>
    <dbReference type="NCBI Taxonomy" id="9598"/>
</organismHost>
<organismHost>
    <name type="scientific">Papio</name>
    <name type="common">baboons</name>
    <dbReference type="NCBI Taxonomy" id="9554"/>
</organismHost>
<organismHost>
    <name type="scientific">Presbytis</name>
    <dbReference type="NCBI Taxonomy" id="9573"/>
</organismHost>
<keyword id="KW-0002">3D-structure</keyword>
<keyword id="KW-0067">ATP-binding</keyword>
<keyword id="KW-1262">Eukaryotic host gene expression shutoff by virus</keyword>
<keyword id="KW-1191">Eukaryotic host transcription shutoff by virus</keyword>
<keyword id="KW-0342">GTP-binding</keyword>
<keyword id="KW-0347">Helicase</keyword>
<keyword id="KW-1032">Host cell membrane</keyword>
<keyword id="KW-1034">Host cell projection</keyword>
<keyword id="KW-1035">Host cytoplasm</keyword>
<keyword id="KW-1036">Host cytoplasmic vesicle</keyword>
<keyword id="KW-1190">Host gene expression shutoff by virus</keyword>
<keyword id="KW-1043">Host membrane</keyword>
<keyword id="KW-1048">Host nucleus</keyword>
<keyword id="KW-0945">Host-virus interaction</keyword>
<keyword id="KW-0378">Hydrolase</keyword>
<keyword id="KW-1104">Inhibition of host RNA polymerase II by virus</keyword>
<keyword id="KW-0449">Lipoprotein</keyword>
<keyword id="KW-0472">Membrane</keyword>
<keyword id="KW-0479">Metal-binding</keyword>
<keyword id="KW-0489">Methyltransferase</keyword>
<keyword id="KW-0506">mRNA capping</keyword>
<keyword id="KW-0507">mRNA processing</keyword>
<keyword id="KW-0511">Multifunctional enzyme</keyword>
<keyword id="KW-0547">Nucleotide-binding</keyword>
<keyword id="KW-0548">Nucleotidyltransferase</keyword>
<keyword id="KW-0564">Palmitate</keyword>
<keyword id="KW-0597">Phosphoprotein</keyword>
<keyword id="KW-0645">Protease</keyword>
<keyword id="KW-1159">RNA suppression of termination</keyword>
<keyword id="KW-0694">RNA-binding</keyword>
<keyword id="KW-0696">RNA-directed RNA polymerase</keyword>
<keyword id="KW-0949">S-adenosyl-L-methionine</keyword>
<keyword id="KW-0788">Thiol protease</keyword>
<keyword id="KW-0808">Transferase</keyword>
<keyword id="KW-0832">Ubl conjugation</keyword>
<keyword id="KW-0693">Viral RNA replication</keyword>
<keyword id="KW-0862">Zinc</keyword>
<organism>
    <name type="scientific">Chikungunya virus (strain 37997)</name>
    <name type="common">CHIKV</name>
    <dbReference type="NCBI Taxonomy" id="371095"/>
    <lineage>
        <taxon>Viruses</taxon>
        <taxon>Riboviria</taxon>
        <taxon>Orthornavirae</taxon>
        <taxon>Kitrinoviricota</taxon>
        <taxon>Alsuviricetes</taxon>
        <taxon>Martellivirales</taxon>
        <taxon>Togaviridae</taxon>
        <taxon>Alphavirus</taxon>
        <taxon>Chikungunya virus</taxon>
    </lineage>
</organism>
<accession>Q5XXP4</accession>
<comment type="function">
    <molecule>Polyprotein P1234</molecule>
    <text evidence="6">Inactive precursor of the viral replicase, which is activated by cleavages carried out by the viral protease nsP2.</text>
</comment>
<comment type="function">
    <molecule>Polyprotein P123</molecule>
    <text evidence="2">The early replication complex formed by the polyprotein P123 and nsP4 synthesizes minus-strand RNAs (By similarity). As soon P123 is cleaved into mature proteins, the plus-strand RNAs synthesis begins (By similarity).</text>
</comment>
<comment type="function">
    <molecule>Polyprotein P123'</molecule>
    <text evidence="13">The early replication complex formed by the polyprotein P123' and nsP4 synthesizes minus-strand RNAs (Probable). Polyprotein P123' is a short-lived polyprotein that accumulates during early stage of infection (Probable). As soon P123' is cleaved into mature proteins, the plus-strand RNAs synthesis begins (Probable).</text>
</comment>
<comment type="function">
    <molecule>mRNA-capping enzyme nsP1</molecule>
    <text evidence="2 6">Cytoplasmic capping enzyme that catalyzes two virus-specific reactions: methyltransferase and guanylyltransferase (By similarity). mRNA-capping is necessary since all viral RNAs are synthesized in the cytoplasm, and host capping enzymes are restricted to the nucleus (Probable). The enzymatic reaction involves a covalent link between 7-methyl-GMP and nsP1, whereas eukaryotic capping enzymes form a covalent complex only with GMP (By similarity). nsP1 capping consists in the following reactions: GTP is first methylated into 7-methyl-GMP and then is covalently linked to nsP1 to form the m7GMp-nsP1 complex from which 7-methyl-GMP complex is transferred to the mRNA to create the cap structure (By similarity). NsP1 is also needed for the initiation of the minus-strand RNAs synthesis (By similarity). At the initiation of virus replication, mediates the assembly of the viral replication complex made of the non-structural proteins, the association of this complex with the inner face of the plasma membrane and the formation of membranous spherules that serve as replication complex factories (By similarity). Forms the neck of these spherules with a central channel for mediating communication and the passage of RNA, nucleotides, and small proteins between the viral replication complex and the host cytoplasm (By similarity). Palmitoylated nsP1 is remodeling host cell cytoskeleton, and induces filopodium-like structure formation at the surface of the host cell (By similarity).</text>
</comment>
<comment type="function">
    <molecule>Protease nsP2</molecule>
    <text evidence="2 3 6">Multifunctional protein whose N-terminus is part of the RNA polymerase complex and displays NTPase, RNA triphosphatase and helicase activities (By similarity). NTPase and RNA triphosphatase are involved in viral RNA capping and helicase keeps a check on the dsRNA replication intermediates (By similarity). The C-terminus harbors a protease that specifically cleaves the polyproteins and releases the mature proteins (By similarity). Required for the shutoff of minus-strand RNAs synthesis (By similarity). Specifically inhibits the host IFN response by promoting the nuclear export of host STAT1 (By similarity). Also inhibits host transcription by inducing the rapid proteasome-dependent degradation of POLR2A, a catalytic subunit of the RNAPII complex (By similarity). The resulting inhibition of cellular protein synthesis serves to ensure maximal viral gene expression and to evade host immune response (By similarity).</text>
</comment>
<comment type="function">
    <molecule>Non-structural protein 3'</molecule>
    <text evidence="2 13">Seems to be essential for minus-strand RNAs and subgenomic 26S mRNAs synthesis (By similarity). Displays mono-ADP-ribosylhydrolase activity (Probable). ADP-ribosylation is a post-translational modification that controls various processes of the host cell and the virus probably needs to revert it for optimal viral replication (Probable). Binds proteins of FXR family and sequesters them into the viral RNA replication complexes thereby inhibiting the formation of host stress granules on viral mRNAs (Probable). The nsp3'-FXR complexes bind viral RNAs and probably orchestrate the assembly of viral replication complexes, thanks to the ability of FXR family members to self-assemble and bind DNA (Probable).</text>
</comment>
<comment type="function">
    <molecule>Non-structural protein 3</molecule>
    <text evidence="2 6">Seems to be essential for minus-strand RNAs and subgenomic 26S mRNAs synthesis (By similarity). Displays mono-ADP-ribosylhydrolase activity (By similarity). ADP-ribosylation is a post-translational modification that controls various processes of the host cell and the virus probably needs to revert it for optimal viral replication (By similarity). Binds proteins of G3BP family and sequesters them into the viral RNA replication complexes thereby inhibiting the formation of host stress granules on viral mRNAs (By similarity). The nsp3-G3BP complexes bind viral RNAs and probably orchestrate the assembly of viral replication complexes, thanks to the ability of G3BP family members to self-assemble and bind DNA (By similarity).</text>
</comment>
<comment type="function">
    <molecule>RNA-directed RNA polymerase nsP4</molecule>
    <text evidence="2">RNA dependent RNA polymerase (By similarity). Replicates genomic and antigenomic RNA by recognizing replications specific signals. The early replication complex formed by the polyprotein P123 and nsP4 synthesizes minus-strand RNAs (By similarity). The late replication complex composed of fully processed nsP1-nsP4 is responsible for the production of genomic and subgenomic plus-strand RNAs (By similarity).</text>
</comment>
<comment type="catalytic activity">
    <reaction evidence="4">
        <text>GTP + S-adenosyl-L-methionine = N(7)-methyl-GTP + S-adenosyl-L-homocysteine</text>
        <dbReference type="Rhea" id="RHEA:46948"/>
        <dbReference type="ChEBI" id="CHEBI:37565"/>
        <dbReference type="ChEBI" id="CHEBI:57856"/>
        <dbReference type="ChEBI" id="CHEBI:59789"/>
        <dbReference type="ChEBI" id="CHEBI:87133"/>
    </reaction>
</comment>
<comment type="catalytic activity">
    <reaction evidence="4">
        <text>N(7)-methyl-GTP + L-histidyl-[protein] = N(tele)-(N(7)-methylguanosine 5'-phospho)-L-histidyl-[protein] + diphosphate</text>
        <dbReference type="Rhea" id="RHEA:54792"/>
        <dbReference type="Rhea" id="RHEA-COMP:9745"/>
        <dbReference type="Rhea" id="RHEA-COMP:13995"/>
        <dbReference type="ChEBI" id="CHEBI:29979"/>
        <dbReference type="ChEBI" id="CHEBI:33019"/>
        <dbReference type="ChEBI" id="CHEBI:87133"/>
        <dbReference type="ChEBI" id="CHEBI:138334"/>
    </reaction>
    <physiologicalReaction direction="left-to-right" evidence="4">
        <dbReference type="Rhea" id="RHEA:54793"/>
    </physiologicalReaction>
</comment>
<comment type="catalytic activity">
    <reaction evidence="4">
        <text>N(tele)-(N(7)-methylguanosine 5'-phospho)-L-histidyl-[protein] + a 5'-end diphospho-(purine-ribonucleoside) in mRNA + H(+) = a 5'-end (N(7)-methyl 5'-triphosphoguanosine)-(purine-ribonucleoside) in mRNA + L-histidyl-[protein]</text>
        <dbReference type="Rhea" id="RHEA:54800"/>
        <dbReference type="Rhea" id="RHEA-COMP:9745"/>
        <dbReference type="Rhea" id="RHEA-COMP:12925"/>
        <dbReference type="Rhea" id="RHEA-COMP:13929"/>
        <dbReference type="Rhea" id="RHEA-COMP:13995"/>
        <dbReference type="ChEBI" id="CHEBI:15378"/>
        <dbReference type="ChEBI" id="CHEBI:29979"/>
        <dbReference type="ChEBI" id="CHEBI:133968"/>
        <dbReference type="ChEBI" id="CHEBI:138276"/>
        <dbReference type="ChEBI" id="CHEBI:138334"/>
    </reaction>
</comment>
<comment type="catalytic activity">
    <reaction evidence="3">
        <text>a 5'-end triphospho-ribonucleoside in mRNA + H2O = a 5'-end diphospho-ribonucleoside in mRNA + phosphate + H(+)</text>
        <dbReference type="Rhea" id="RHEA:67004"/>
        <dbReference type="Rhea" id="RHEA-COMP:17164"/>
        <dbReference type="Rhea" id="RHEA-COMP:17165"/>
        <dbReference type="ChEBI" id="CHEBI:15377"/>
        <dbReference type="ChEBI" id="CHEBI:15378"/>
        <dbReference type="ChEBI" id="CHEBI:43474"/>
        <dbReference type="ChEBI" id="CHEBI:167616"/>
        <dbReference type="ChEBI" id="CHEBI:167618"/>
        <dbReference type="EC" id="3.6.1.74"/>
    </reaction>
    <physiologicalReaction direction="left-to-right" evidence="3">
        <dbReference type="Rhea" id="RHEA:67005"/>
    </physiologicalReaction>
</comment>
<comment type="catalytic activity">
    <reaction evidence="6">
        <text>a ribonucleoside 5'-triphosphate + H2O = a ribonucleoside 5'-diphosphate + phosphate + H(+)</text>
        <dbReference type="Rhea" id="RHEA:23680"/>
        <dbReference type="ChEBI" id="CHEBI:15377"/>
        <dbReference type="ChEBI" id="CHEBI:15378"/>
        <dbReference type="ChEBI" id="CHEBI:43474"/>
        <dbReference type="ChEBI" id="CHEBI:57930"/>
        <dbReference type="ChEBI" id="CHEBI:61557"/>
        <dbReference type="EC" id="3.6.1.15"/>
    </reaction>
</comment>
<comment type="catalytic activity">
    <reaction evidence="6">
        <text>ATP + H2O = ADP + phosphate + H(+)</text>
        <dbReference type="Rhea" id="RHEA:13065"/>
        <dbReference type="ChEBI" id="CHEBI:15377"/>
        <dbReference type="ChEBI" id="CHEBI:15378"/>
        <dbReference type="ChEBI" id="CHEBI:30616"/>
        <dbReference type="ChEBI" id="CHEBI:43474"/>
        <dbReference type="ChEBI" id="CHEBI:456216"/>
        <dbReference type="EC" id="3.6.4.13"/>
    </reaction>
</comment>
<comment type="catalytic activity">
    <reaction evidence="8">
        <text>RNA(n) + a ribonucleoside 5'-triphosphate = RNA(n+1) + diphosphate</text>
        <dbReference type="Rhea" id="RHEA:21248"/>
        <dbReference type="Rhea" id="RHEA-COMP:14527"/>
        <dbReference type="Rhea" id="RHEA-COMP:17342"/>
        <dbReference type="ChEBI" id="CHEBI:33019"/>
        <dbReference type="ChEBI" id="CHEBI:61557"/>
        <dbReference type="ChEBI" id="CHEBI:140395"/>
        <dbReference type="EC" id="2.7.7.48"/>
    </reaction>
</comment>
<comment type="catalytic activity">
    <reaction evidence="6">
        <text>4-O-(ADP-D-ribosyl)-L-aspartyl-[protein] + H2O = L-aspartyl-[protein] + ADP-D-ribose + H(+)</text>
        <dbReference type="Rhea" id="RHEA:54428"/>
        <dbReference type="Rhea" id="RHEA-COMP:9867"/>
        <dbReference type="Rhea" id="RHEA-COMP:13832"/>
        <dbReference type="ChEBI" id="CHEBI:15377"/>
        <dbReference type="ChEBI" id="CHEBI:15378"/>
        <dbReference type="ChEBI" id="CHEBI:29961"/>
        <dbReference type="ChEBI" id="CHEBI:57967"/>
        <dbReference type="ChEBI" id="CHEBI:138102"/>
    </reaction>
    <physiologicalReaction direction="left-to-right" evidence="6">
        <dbReference type="Rhea" id="RHEA:54429"/>
    </physiologicalReaction>
</comment>
<comment type="catalytic activity">
    <reaction evidence="6">
        <text>5-O-(ADP-D-ribosyl)-L-glutamyl-[protein] + H2O = L-glutamyl-[protein] + ADP-D-ribose + H(+)</text>
        <dbReference type="Rhea" id="RHEA:58248"/>
        <dbReference type="Rhea" id="RHEA-COMP:10208"/>
        <dbReference type="Rhea" id="RHEA-COMP:15089"/>
        <dbReference type="ChEBI" id="CHEBI:15377"/>
        <dbReference type="ChEBI" id="CHEBI:15378"/>
        <dbReference type="ChEBI" id="CHEBI:29973"/>
        <dbReference type="ChEBI" id="CHEBI:57967"/>
        <dbReference type="ChEBI" id="CHEBI:142540"/>
    </reaction>
    <physiologicalReaction direction="left-to-right" evidence="6">
        <dbReference type="Rhea" id="RHEA:58249"/>
    </physiologicalReaction>
</comment>
<comment type="catalytic activity">
    <reaction evidence="2">
        <text>RNA(n) + ATP = RNA(n)-3'-adenine ribonucleotide + diphosphate</text>
        <dbReference type="Rhea" id="RHEA:11332"/>
        <dbReference type="Rhea" id="RHEA-COMP:14527"/>
        <dbReference type="Rhea" id="RHEA-COMP:17347"/>
        <dbReference type="ChEBI" id="CHEBI:30616"/>
        <dbReference type="ChEBI" id="CHEBI:33019"/>
        <dbReference type="ChEBI" id="CHEBI:140395"/>
        <dbReference type="ChEBI" id="CHEBI:173115"/>
        <dbReference type="EC" id="2.7.7.19"/>
    </reaction>
</comment>
<comment type="catalytic activity">
    <reaction evidence="6">
        <text>ADP-alpha-D-ribose 1''-phosphate + H2O = ADP-D-ribose + phosphate</text>
        <dbReference type="Rhea" id="RHEA:25029"/>
        <dbReference type="ChEBI" id="CHEBI:15377"/>
        <dbReference type="ChEBI" id="CHEBI:43474"/>
        <dbReference type="ChEBI" id="CHEBI:57967"/>
        <dbReference type="ChEBI" id="CHEBI:58753"/>
        <dbReference type="EC" id="3.1.3.84"/>
    </reaction>
    <physiologicalReaction direction="left-to-right" evidence="6">
        <dbReference type="Rhea" id="RHEA:25030"/>
    </physiologicalReaction>
</comment>
<comment type="cofactor">
    <cofactor evidence="2">
        <name>Mg(2+)</name>
        <dbReference type="ChEBI" id="CHEBI:18420"/>
    </cofactor>
    <cofactor evidence="2">
        <name>Mn(2+)</name>
        <dbReference type="ChEBI" id="CHEBI:29035"/>
    </cofactor>
    <text evidence="2">For nsP4 adenylyltransferase activity; Mn(2+) supports catalysis at 60% of the levels observed with Mg(2+).</text>
</comment>
<comment type="cofactor">
    <cofactor>
        <name>Mg(2+)</name>
        <dbReference type="ChEBI" id="CHEBI:18420"/>
    </cofactor>
    <text evidence="2">For nsP4 RNA-directed RNA polymerase activity.</text>
</comment>
<comment type="cofactor">
    <cofactor evidence="4">
        <name>Mg(2+)</name>
        <dbReference type="ChEBI" id="CHEBI:18420"/>
    </cofactor>
    <text evidence="4">For nsP1 guanylylation.</text>
</comment>
<comment type="cofactor">
    <cofactor>
        <name>Mg(2+)</name>
        <dbReference type="ChEBI" id="CHEBI:18420"/>
    </cofactor>
    <text evidence="6">For nsP2 RNA triphosphatase activity.</text>
</comment>
<comment type="cofactor">
    <cofactor>
        <name>Mg(2+)</name>
        <dbReference type="ChEBI" id="CHEBI:18420"/>
    </cofactor>
    <text evidence="6">For nsP2 NTPase activity.</text>
</comment>
<comment type="subunit">
    <molecule>mRNA-capping enzyme nsP1</molecule>
    <text evidence="6">Homododecamer (By similarity). The enzyme forms a membrane-associated dodecameric ring with a central channel for the exchange of between the viral replication factories and the host cytoplasm (By similarity). Interacts with non-structural protein 3 (By similarity). Interacts with RNA-directed RNA polymerase nsP4 (By similarity). Interacts with protease nsP2 (By similarity). Interacts with itself (By similarity). Interacts with host STING1; this interaction results in inhibition of cGAS-STING signaling and increased levels of palmitoylation and protein stabilization of nsP1 (By similarity). Interacts with host TMEM45B; this interaction leads to viral replication inhibition (By similarity).</text>
</comment>
<comment type="subunit">
    <molecule>Non-structural protein 3</molecule>
    <text evidence="6">Interacts with mRNA-capping enzyme nsP1 (By similarity). Interacts (via C-terminus) with host G3BP1; this interaction inhibits the formation of host stress granules on viral mRNAs and the nsp3-G3BP1 complexes bind viral RNAs and probably orchestrate the assembly of viral replication complexes (By similarity). Interacts (via C-terminus) with host G3BP2; this interaction inhibits the formation of host stress granules on viral mRNAs and the nsp3-G3BP2 complexes bind viral RNAs and probably orchestrate the assembly of viral replication complexes (By similarity). Interacts (via C-terminus) with host NAP1L1 (By similarity). Interacts (via C-terminus) with host NAP1L4 (By similarity). Interacts (via C-terminus) with host DHX9; this interaction allows the recruitment of DHX9 to the plasma membrane, where it associates with viral replication complexes and may play a role in the translation-to-replication switch (By similarity). Interacts (via C-terminus) with host FHL1 (via LIM domain 1); this interaction is required for viral RNA replication (By similarity). Interacts (via C-terminus) with host CD2AP; this interaction plays a role in initiation of viral replication (By similarity). Interacts (via C-terminus) with host SH3KBP1; this interaction plays a role in initiation of viral replication (By similarity).</text>
</comment>
<comment type="subunit">
    <molecule>RNA-directed RNA polymerase nsP4</molecule>
    <text evidence="2 4 6">Interacts with mRNA-capping enzyme nsP1 (By similarity). Interacts with protease nsP2 (By similarity). interacts with itself (By similarity). Interacts with host TMEM45B; this interaction leads to viral replication inhibition (By similarity).</text>
</comment>
<comment type="subunit">
    <molecule>Protease nsP2</molecule>
    <text evidence="2 4 6">Interacts with RNA-directed RNA polymerase nsP4 (By similarity). Interacts with mRNA-capping enzyme nsP1 (By similarity). Interacts with KPNA1/karyopherin-alpha1; this interaction probably allows the active transport of protease nsP2 into the host nucleus (By similarity).</text>
</comment>
<comment type="subcellular location">
    <molecule>Polyprotein P1234</molecule>
    <subcellularLocation>
        <location evidence="13">Host cytoplasmic vesicle membrane</location>
        <topology evidence="13">Peripheral membrane protein</topology>
    </subcellularLocation>
    <text evidence="13">Part of cytoplasmic vesicles, which are probably formed at the plasma membrane and internalized leading to late endosomal/lysosomal spherules containing the replication complex.</text>
</comment>
<comment type="subcellular location">
    <molecule>Polyprotein P123'</molecule>
    <subcellularLocation>
        <location evidence="13">Host cytoplasmic vesicle membrane</location>
        <topology evidence="13">Peripheral membrane protein</topology>
    </subcellularLocation>
    <text evidence="13">Part of cytoplasmic vesicles, which are probably formed at the plasma membrane and internalized leading to late endosomal/lysosomal spherules containing the replication complex.</text>
</comment>
<comment type="subcellular location">
    <molecule>Polyprotein P123</molecule>
    <subcellularLocation>
        <location evidence="13">Host cytoplasmic vesicle membrane</location>
        <topology evidence="13">Peripheral membrane protein</topology>
    </subcellularLocation>
    <text evidence="13">Part of cytoplasmic vesicles, which are probably formed at the plasma membrane and internalized leading to late endosomal/lysosomal spherules containing the replication complex.</text>
</comment>
<comment type="subcellular location">
    <molecule>mRNA-capping enzyme nsP1</molecule>
    <subcellularLocation>
        <location evidence="3">Host cytoplasmic vesicle membrane</location>
        <topology evidence="3">Lipid-anchor</topology>
    </subcellularLocation>
    <subcellularLocation>
        <location evidence="3">Host cell membrane</location>
        <topology evidence="3">Lipid-anchor</topology>
        <orientation evidence="3">Cytoplasmic side</orientation>
    </subcellularLocation>
    <subcellularLocation>
        <location evidence="6">Host cell projection</location>
        <location evidence="6">Host filopodium</location>
    </subcellularLocation>
    <text evidence="3 6">In the late phase of infection, the polyprotein is quickly cleaved before localization to cellular membranes. Then a fraction of nsP1 localizes to the inner surface of the plasma membrane and its filopodial extensions. Only the palmitoylated nsP1 localizes to the host filopodia (By similarity). NsP1 is also part of cytoplasmic vesicles, which are probably formed at the plasma membrane and internalized leading to late endosomal/lysosomal spherules containing the replication complex (By similarity).</text>
</comment>
<comment type="subcellular location">
    <molecule>Protease nsP2</molecule>
    <subcellularLocation>
        <location evidence="3">Host cytoplasmic vesicle membrane</location>
        <topology evidence="3">Peripheral membrane protein</topology>
    </subcellularLocation>
    <subcellularLocation>
        <location evidence="4">Host nucleus</location>
    </subcellularLocation>
    <subcellularLocation>
        <location evidence="4">Host cytoplasm</location>
    </subcellularLocation>
    <text evidence="3 4">In the late phase of infection, the polyprotein is quickly cleaved before localization to cellular membranes. Then approximately half of nsP2 is found in the nucleus (By similarity). Shuttles between cytoplasm and nucleus (By similarity). NsP2 is also part of cytoplasmic vesicles, which are probably formed at the plasma membrane and internalized leading to late endosomal/lysosomal spherules containing the replication complex (By similarity).</text>
</comment>
<comment type="subcellular location">
    <molecule>Non-structural protein 3'</molecule>
    <subcellularLocation>
        <location evidence="2">Host cytoplasmic vesicle membrane</location>
        <topology evidence="13">Peripheral membrane protein</topology>
    </subcellularLocation>
    <text evidence="2">In the late phase of infection, the polyprotein is quickly cleaved before localization to cellular membranes. Then nsP3 and nsP3' form aggregates in cytoplasm (By similarity). NsP3' is also part of cytoplasmic vesicles, which are probably formed at the plasma membrane and internalized leading to late endosomal/lysosomal spherules containing the replication complex (By similarity).</text>
</comment>
<comment type="subcellular location">
    <molecule>Non-structural protein 3</molecule>
    <subcellularLocation>
        <location evidence="2">Host cytoplasmic vesicle membrane</location>
        <topology evidence="13">Peripheral membrane protein</topology>
    </subcellularLocation>
    <text evidence="2">In the late phase of infection, the polyprotein is quickly cleaved before localization to cellular membranes. Then nsP3 and nsP3' form aggregates in cytoplasm (By similarity). NsP3 is also part of cytoplasmic vesicles, which are probably formed at the plasma membrane and internalized leading to late endosomal/lysosomal spherules containing the replication complex (By similarity).</text>
</comment>
<comment type="subcellular location">
    <molecule>RNA-directed RNA polymerase nsP4</molecule>
    <subcellularLocation>
        <location>Host cytoplasmic vesicle membrane</location>
        <topology evidence="3">Peripheral membrane protein</topology>
    </subcellularLocation>
    <text evidence="3">NsP4 is part of cytoplasmic vesicles, which are probably formed at the plasma membrane and internalized leading to late endosomal/lysosomal spherules containing the replication complex.</text>
</comment>
<comment type="domain">
    <molecule>Protease nsP2</molecule>
    <text evidence="4 6">The N-terminus exhibits NTPase and RNA triphosphatase activities and is proposed to have helicase activity, whereas the C-terminus possesses protease activity (By similarity). Contains a nuclear localization signal and a nuclear export signal, these two motifs are probably involved in the shuttling between the cytoplasm and the nucleus of nsP2 (By similarity). The C-terminus is required for promoting the export of host STAT1 (By similarity).</text>
</comment>
<comment type="domain">
    <molecule>mRNA-capping enzyme nsP1</molecule>
    <text evidence="6">The N-terminus binds a zinc ion which stabilizes this region (By similarity). The C-terminus is disordered (By similarity).</text>
</comment>
<comment type="domain">
    <molecule>Non-structural protein 3</molecule>
    <text evidence="6">In the N-terminus, the macro domain displays a mono-ADP-ribosylhydrolase activity (By similarity). The central part called, the alphavirus unique domain (AUD) has a zinc-binding function (By similarity). The C-terminus region, also called hypervariable domain (HVD), is mainly disordered and binds several host proteins (By similarity). This intrinsically disordered domain contains 2 SH3 domain-binding sites and 2 FGDF motifs necessary and sufficient for the formation of nsP3/G3BP complexes (By similarity).</text>
</comment>
<comment type="domain">
    <molecule>Non-structural protein 3'</molecule>
    <text evidence="2 6">In the N-terminus, the macro domain displays a mono-ADP-ribosylhydrolase activity (By similarity). The central part has a zinc-binding function (By similarity). The C-terminus contains two FGDF motifs necessary and sufficient for formation of the nsP3'/G3BP1 complex (By similarity).</text>
</comment>
<comment type="PTM">
    <molecule>Polyprotein P1234</molecule>
    <text evidence="2">Specific enzymatic cleavages in vivo yield mature proteins (By similarity). The processing of the polyprotein is temporally regulated (By similarity). In early stages (1.7 hpi), P1234 is first cleaved in trans through its nsP2 protease activity, releasing P123' and nsP4, which associate to form the early replication complex (By similarity). At the same time, P1234 is also cut at the nsP1/nsP2 site early in infection but with lower efficiency (By similarity). After replication of the viral minus-strand RNAs (4 hpi), the polyproteins are cut at the nsP1/nsP2 and nsP2/nsP3 sites very efficiently, preventing accumulation of P123' and P1234 and allowing the formation of the late replication complex (By similarity). NsP3'/nsP4 site is not cleaved anymore and P34 is produced rather than nsP4 (By similarity).</text>
</comment>
<comment type="PTM">
    <molecule>Polyprotein P123</molecule>
    <text evidence="2">Specific enzymatic cleavages in vivo yield mature proteins (By similarity). The processing of the polyprotein is temporally regulated (By similarity). In early stages (1.7 hpi), P123 is cleaved at the nsP1/nsP2 site with low efficiency (By similarity). After replication of the viral minus-strand RNAs (4 hpi), the polyproteins are cut at the nsP1/nsP2 and nsP2/nsP3 sites very efficiently, preventing accumulation of P123 and allowing the formation of the late replication complex (By similarity).</text>
</comment>
<comment type="PTM">
    <molecule>Polyprotein P123'</molecule>
    <text evidence="2">Specific enzymatic cleavages in vivo yield mature proteins (By similarity). The processing of the polyprotein is temporally regulated (By similarity). In early stages (1.7 hpi), P123' is cleaved at the nsP1/nsP2 site with low efficiency (By similarity). After replication of the viral minus-strand RNAs (4 hpi), the polyproteins are cut at the nsP1/nsP2 and nsP2/nsP3 sites very efficiently, preventing accumulation of P123' and allowing the formation of the late replication complex (By similarity).</text>
</comment>
<comment type="PTM">
    <molecule>mRNA-capping enzyme nsP1</molecule>
    <text evidence="6">Palmitoylated by host palmitoyltransferases ZDHHC2 and ZDHHC19 (By similarity). Palmitoylation is increased by the interacton with host STING1 (By similarity).</text>
</comment>
<comment type="PTM">
    <molecule>Non-structural protein 3</molecule>
    <text evidence="3">Phosphorylated by host on serines and threonines.</text>
</comment>
<comment type="PTM">
    <molecule>Non-structural protein 3'</molecule>
    <text evidence="3">Phosphorylated by host on serines and threonines.</text>
</comment>
<comment type="PTM">
    <molecule>RNA-directed RNA polymerase nsP4</molecule>
    <text evidence="2">Ubiquitinated; targets the protein for rapid degradation via the ubiquitin system (By similarity). Nsp4 is present in extremely low quantities due to low frequency of translation through the amber stop-codon and the degradation by the ubiquitin pathway (By similarity).</text>
</comment>
<comment type="miscellaneous">
    <text evidence="2">Viral replication produces dsRNA in the late phase of infection, resulting in a strong activation of host EIF2AK2/PKR, leading to almost complete phosphorylation of EIF2A (By similarity). This inactivates completely cellular translation initiation, resulting shutoff of host proteins synthesis (By similarity). However, phosphorylation of EIF2A is probably not the only mechanism responsible for the host translation shutoff (By similarity). The viral translation can still occur normally because it relies on a hairpin structure in the coding region of sgRNA and is EIF2A-, EIF2D-, EIF4G- EIF4A-independent (By similarity).</text>
</comment>
<comment type="miscellaneous">
    <text evidence="1 2 13">The genome codes for P123, but readthrough of a terminator codon UGA occurs between the codons for Leu-1856 and Leu-1858 giving rise to P1234 (Probable). P1234 is cleaved quickly by nsP2 into P123' and nsP4 (By similarity). Further processing of p123' gives nsP1, nsP2 and nsP3' which is 6 amino acids longer than nsP3 since the cleavage site is after the readthrough (By similarity). This unusual molecular mechanism ensures that few nsP4 are produced compared to other non-structural proteins (By similarity). Mutant viruses with no alternative termination site grow significantly slower than wild-type virus (By similarity). The opal termination codon is frequently mutated to a sense codon on passage in cell culture (By similarity). The presence of the opal codon may be a requirement for viral maintenance in both vertebrate and invertebrate hosts and a selective advantage may be conferred in cell culture for the sense codon (By similarity).</text>
</comment>
<evidence type="ECO:0000250" key="1">
    <source>
        <dbReference type="UniProtKB" id="O90368"/>
    </source>
</evidence>
<evidence type="ECO:0000250" key="2">
    <source>
        <dbReference type="UniProtKB" id="P03317"/>
    </source>
</evidence>
<evidence type="ECO:0000250" key="3">
    <source>
        <dbReference type="UniProtKB" id="P08411"/>
    </source>
</evidence>
<evidence type="ECO:0000250" key="4">
    <source>
        <dbReference type="UniProtKB" id="P27282"/>
    </source>
</evidence>
<evidence type="ECO:0000250" key="5">
    <source>
        <dbReference type="UniProtKB" id="P36328"/>
    </source>
</evidence>
<evidence type="ECO:0000250" key="6">
    <source>
        <dbReference type="UniProtKB" id="Q8JUX6"/>
    </source>
</evidence>
<evidence type="ECO:0000255" key="7">
    <source>
        <dbReference type="PROSITE-ProRule" id="PRU00490"/>
    </source>
</evidence>
<evidence type="ECO:0000255" key="8">
    <source>
        <dbReference type="PROSITE-ProRule" id="PRU00539"/>
    </source>
</evidence>
<evidence type="ECO:0000255" key="9">
    <source>
        <dbReference type="PROSITE-ProRule" id="PRU00853"/>
    </source>
</evidence>
<evidence type="ECO:0000255" key="10">
    <source>
        <dbReference type="PROSITE-ProRule" id="PRU00990"/>
    </source>
</evidence>
<evidence type="ECO:0000255" key="11">
    <source>
        <dbReference type="PROSITE-ProRule" id="PRU01079"/>
    </source>
</evidence>
<evidence type="ECO:0000256" key="12">
    <source>
        <dbReference type="SAM" id="MobiDB-lite"/>
    </source>
</evidence>
<evidence type="ECO:0000305" key="13"/>
<evidence type="ECO:0007829" key="14">
    <source>
        <dbReference type="PDB" id="6W0T"/>
    </source>
</evidence>
<proteinExistence type="evidence at protein level"/>
<feature type="chain" id="PRO_0000308396" description="Polyprotein P1234">
    <location>
        <begin position="1"/>
        <end position="2474"/>
    </location>
</feature>
<feature type="chain" id="PRO_0000227765" description="Polyprotein P123'">
    <location>
        <begin position="1"/>
        <end position="1863"/>
    </location>
</feature>
<feature type="chain" id="PRO_0000446648" description="Polyprotein P123">
    <location>
        <begin position="1"/>
        <end position="1856"/>
    </location>
</feature>
<feature type="chain" id="PRO_0000227766" description="mRNA-capping enzyme nsP1">
    <location>
        <begin position="1"/>
        <end position="535"/>
    </location>
</feature>
<feature type="chain" id="PRO_0000227767" description="Protease nsP2">
    <location>
        <begin position="536"/>
        <end position="1333"/>
    </location>
</feature>
<feature type="chain" id="PRO_0000227768" description="Non-structural protein 3'">
    <location>
        <begin position="1334"/>
        <end position="1863"/>
    </location>
</feature>
<feature type="chain" id="PRO_0000446649" description="Non-structural protein 3">
    <location>
        <begin position="1334"/>
        <end position="1856"/>
    </location>
</feature>
<feature type="chain" id="PRO_0000227769" description="RNA-directed RNA polymerase nsP4">
    <location>
        <begin position="1864"/>
        <end position="2474"/>
    </location>
</feature>
<feature type="domain" description="Alphavirus-like MT" evidence="11">
    <location>
        <begin position="28"/>
        <end position="259"/>
    </location>
</feature>
<feature type="domain" description="(+)RNA virus helicase ATP-binding" evidence="10">
    <location>
        <begin position="690"/>
        <end position="842"/>
    </location>
</feature>
<feature type="domain" description="(+)RNA virus helicase C-terminal" evidence="10">
    <location>
        <begin position="843"/>
        <end position="991"/>
    </location>
</feature>
<feature type="domain" description="Peptidase C9" evidence="9">
    <location>
        <begin position="1004"/>
        <end position="1327"/>
    </location>
</feature>
<feature type="domain" description="Macro" evidence="7">
    <location>
        <begin position="1334"/>
        <end position="1493"/>
    </location>
</feature>
<feature type="domain" description="RdRp catalytic" evidence="8">
    <location>
        <begin position="2228"/>
        <end position="2343"/>
    </location>
</feature>
<feature type="region of interest" description="Membrane-binding and oligomerization" evidence="6">
    <location>
        <begin position="295"/>
        <end position="450"/>
    </location>
</feature>
<feature type="region of interest" description="Nucleolus localization signal" evidence="3">
    <location>
        <begin position="1005"/>
        <end position="1024"/>
    </location>
</feature>
<feature type="region of interest" description="Disordered" evidence="12">
    <location>
        <begin position="1651"/>
        <end position="1706"/>
    </location>
</feature>
<feature type="region of interest" description="HVD" evidence="6">
    <location>
        <begin position="1659"/>
        <end position="1857"/>
    </location>
</feature>
<feature type="region of interest" description="Interaction with host CD2AP" evidence="6">
    <location>
        <begin position="1726"/>
        <end position="1739"/>
    </location>
</feature>
<feature type="region of interest" description="Interaction with host FHL1" evidence="6">
    <location>
        <begin position="1745"/>
        <end position="1793"/>
    </location>
</feature>
<feature type="region of interest" description="Interaction with host CD2AP" evidence="6">
    <location>
        <begin position="1756"/>
        <end position="1767"/>
    </location>
</feature>
<feature type="region of interest" description="Interaction with host CD2AP" evidence="6">
    <location>
        <begin position="1820"/>
        <end position="1828"/>
    </location>
</feature>
<feature type="short sequence motif" description="Nuclear export signal" evidence="4">
    <location>
        <begin position="1058"/>
        <end position="1067"/>
    </location>
</feature>
<feature type="short sequence motif" description="Nuclear localization signal" evidence="3">
    <location>
        <begin position="1182"/>
        <end position="1186"/>
    </location>
</feature>
<feature type="short sequence motif" description="FGDF; binding to host G3BP1" evidence="3">
    <location>
        <begin position="1812"/>
        <end position="1815"/>
    </location>
</feature>
<feature type="short sequence motif" description="FGDF; binding to host G3BP1" evidence="3">
    <location>
        <begin position="1830"/>
        <end position="1833"/>
    </location>
</feature>
<feature type="compositionally biased region" description="Polar residues" evidence="12">
    <location>
        <begin position="1660"/>
        <end position="1679"/>
    </location>
</feature>
<feature type="active site" description="For mRNA-capping enzyme nsP1 activity" evidence="6">
    <location>
        <position position="37"/>
    </location>
</feature>
<feature type="active site" description="For cysteine protease nsP2 activity" evidence="9">
    <location>
        <position position="1013"/>
    </location>
</feature>
<feature type="active site" description="For cysteine protease nsP2 activity" evidence="9">
    <location>
        <position position="1083"/>
    </location>
</feature>
<feature type="binding site" evidence="6">
    <location>
        <position position="79"/>
    </location>
    <ligand>
        <name>Zn(2+)</name>
        <dbReference type="ChEBI" id="CHEBI:29105"/>
    </ligand>
</feature>
<feature type="binding site" evidence="6">
    <location>
        <position position="129"/>
    </location>
    <ligand>
        <name>Zn(2+)</name>
        <dbReference type="ChEBI" id="CHEBI:29105"/>
    </ligand>
</feature>
<feature type="binding site" evidence="6">
    <location>
        <position position="134"/>
    </location>
    <ligand>
        <name>Zn(2+)</name>
        <dbReference type="ChEBI" id="CHEBI:29105"/>
    </ligand>
</feature>
<feature type="binding site" evidence="6">
    <location>
        <position position="141"/>
    </location>
    <ligand>
        <name>Zn(2+)</name>
        <dbReference type="ChEBI" id="CHEBI:29105"/>
    </ligand>
</feature>
<feature type="binding site" evidence="10">
    <location>
        <begin position="721"/>
        <end position="728"/>
    </location>
    <ligand>
        <name>a ribonucleoside 5'-triphosphate</name>
        <dbReference type="ChEBI" id="CHEBI:61557"/>
    </ligand>
</feature>
<feature type="binding site" evidence="5">
    <location>
        <position position="1343"/>
    </location>
    <ligand>
        <name>ADP-D-ribose</name>
        <dbReference type="ChEBI" id="CHEBI:57967"/>
    </ligand>
</feature>
<feature type="binding site" evidence="6">
    <location>
        <position position="1357"/>
    </location>
    <ligand>
        <name>ADP-D-ribose</name>
        <dbReference type="ChEBI" id="CHEBI:57967"/>
    </ligand>
</feature>
<feature type="binding site" evidence="6">
    <location>
        <position position="1365"/>
    </location>
    <ligand>
        <name>ADP-D-ribose</name>
        <dbReference type="ChEBI" id="CHEBI:57967"/>
    </ligand>
</feature>
<feature type="binding site" evidence="5">
    <location>
        <position position="1445"/>
    </location>
    <ligand>
        <name>ADP-D-ribose</name>
        <dbReference type="ChEBI" id="CHEBI:57967"/>
    </ligand>
</feature>
<feature type="binding site" evidence="6">
    <location>
        <position position="1446"/>
    </location>
    <ligand>
        <name>ADP-D-ribose</name>
        <dbReference type="ChEBI" id="CHEBI:57967"/>
    </ligand>
</feature>
<feature type="binding site" evidence="6">
    <location>
        <position position="1447"/>
    </location>
    <ligand>
        <name>ADP-D-ribose</name>
        <dbReference type="ChEBI" id="CHEBI:57967"/>
    </ligand>
</feature>
<feature type="binding site" evidence="2">
    <location>
        <position position="1595"/>
    </location>
    <ligand>
        <name>Zn(2+)</name>
        <dbReference type="ChEBI" id="CHEBI:29105"/>
    </ligand>
</feature>
<feature type="binding site" evidence="2">
    <location>
        <position position="1597"/>
    </location>
    <ligand>
        <name>Zn(2+)</name>
        <dbReference type="ChEBI" id="CHEBI:29105"/>
    </ligand>
</feature>
<feature type="binding site" evidence="2">
    <location>
        <position position="1620"/>
    </location>
    <ligand>
        <name>Zn(2+)</name>
        <dbReference type="ChEBI" id="CHEBI:29105"/>
    </ligand>
</feature>
<feature type="binding site" evidence="2">
    <location>
        <position position="1638"/>
    </location>
    <ligand>
        <name>Zn(2+)</name>
        <dbReference type="ChEBI" id="CHEBI:29105"/>
    </ligand>
</feature>
<feature type="site" description="Involved in the phosphoramide link with 7-methyl-GMP" evidence="4">
    <location>
        <position position="37"/>
    </location>
</feature>
<feature type="site" description="Cleavage; by protease nsP2" evidence="2">
    <location>
        <begin position="535"/>
        <end position="536"/>
    </location>
</feature>
<feature type="site" description="Cleavage; by protease nsP2" evidence="2">
    <location>
        <begin position="1333"/>
        <end position="1334"/>
    </location>
</feature>
<feature type="site" description="Cleavage; by protease nsP2" evidence="6">
    <location>
        <begin position="1863"/>
        <end position="1864"/>
    </location>
</feature>
<feature type="lipid moiety-binding region" description="S-palmitoyl cysteine; by host" evidence="6">
    <location>
        <position position="417"/>
    </location>
</feature>
<feature type="lipid moiety-binding region" description="S-palmitoyl cysteine; by host" evidence="6">
    <location>
        <position position="419"/>
    </location>
</feature>
<feature type="strand" evidence="14">
    <location>
        <begin position="1337"/>
        <end position="1342"/>
    </location>
</feature>
<feature type="helix" evidence="14">
    <location>
        <begin position="1344"/>
        <end position="1346"/>
    </location>
</feature>
<feature type="strand" evidence="14">
    <location>
        <begin position="1352"/>
        <end position="1355"/>
    </location>
</feature>
<feature type="helix" evidence="14">
    <location>
        <begin position="1366"/>
        <end position="1373"/>
    </location>
</feature>
<feature type="helix" evidence="14">
    <location>
        <begin position="1375"/>
        <end position="1378"/>
    </location>
</feature>
<feature type="strand" evidence="14">
    <location>
        <begin position="1388"/>
        <end position="1393"/>
    </location>
</feature>
<feature type="strand" evidence="14">
    <location>
        <begin position="1396"/>
        <end position="1401"/>
    </location>
</feature>
<feature type="turn" evidence="14">
    <location>
        <begin position="1406"/>
        <end position="1408"/>
    </location>
</feature>
<feature type="helix" evidence="14">
    <location>
        <begin position="1411"/>
        <end position="1432"/>
    </location>
</feature>
<feature type="strand" evidence="14">
    <location>
        <begin position="1435"/>
        <end position="1440"/>
    </location>
</feature>
<feature type="helix" evidence="14">
    <location>
        <begin position="1454"/>
        <end position="1465"/>
    </location>
</feature>
<feature type="strand" evidence="14">
    <location>
        <begin position="1470"/>
        <end position="1477"/>
    </location>
</feature>
<feature type="helix" evidence="14">
    <location>
        <begin position="1479"/>
        <end position="1490"/>
    </location>
</feature>